<comment type="function">
    <text evidence="1">Required for the formation of a threonylcarbamoyl group on adenosine at position 37 (t(6)A37) in tRNAs that read codons beginning with adenine. Is involved in the transfer of the threonylcarbamoyl moiety of threonylcarbamoyl-AMP (TC-AMP) to the N6 group of A37, together with TsaE and TsaB. TsaD likely plays a direct catalytic role in this reaction.</text>
</comment>
<comment type="catalytic activity">
    <reaction evidence="1">
        <text>L-threonylcarbamoyladenylate + adenosine(37) in tRNA = N(6)-L-threonylcarbamoyladenosine(37) in tRNA + AMP + H(+)</text>
        <dbReference type="Rhea" id="RHEA:37059"/>
        <dbReference type="Rhea" id="RHEA-COMP:10162"/>
        <dbReference type="Rhea" id="RHEA-COMP:10163"/>
        <dbReference type="ChEBI" id="CHEBI:15378"/>
        <dbReference type="ChEBI" id="CHEBI:73682"/>
        <dbReference type="ChEBI" id="CHEBI:74411"/>
        <dbReference type="ChEBI" id="CHEBI:74418"/>
        <dbReference type="ChEBI" id="CHEBI:456215"/>
        <dbReference type="EC" id="2.3.1.234"/>
    </reaction>
</comment>
<comment type="cofactor">
    <cofactor evidence="1">
        <name>Fe(2+)</name>
        <dbReference type="ChEBI" id="CHEBI:29033"/>
    </cofactor>
    <text evidence="1">Binds 1 Fe(2+) ion per subunit.</text>
</comment>
<comment type="subcellular location">
    <subcellularLocation>
        <location evidence="1">Cytoplasm</location>
    </subcellularLocation>
</comment>
<comment type="similarity">
    <text evidence="1">Belongs to the KAE1 / TsaD family.</text>
</comment>
<dbReference type="EC" id="2.3.1.234" evidence="1"/>
<dbReference type="EMBL" id="AE000657">
    <property type="protein sequence ID" value="AAC06951.1"/>
    <property type="molecule type" value="Genomic_DNA"/>
</dbReference>
<dbReference type="PIR" id="G70369">
    <property type="entry name" value="G70369"/>
</dbReference>
<dbReference type="RefSeq" id="NP_213547.1">
    <property type="nucleotide sequence ID" value="NC_000918.1"/>
</dbReference>
<dbReference type="RefSeq" id="WP_010880485.1">
    <property type="nucleotide sequence ID" value="NC_000918.1"/>
</dbReference>
<dbReference type="PDB" id="8IEY">
    <property type="method" value="X-ray"/>
    <property type="resolution" value="2.00 A"/>
    <property type="chains" value="A=1-335"/>
</dbReference>
<dbReference type="PDB" id="8IFX">
    <property type="method" value="X-ray"/>
    <property type="resolution" value="2.00 A"/>
    <property type="chains" value="A=1-335"/>
</dbReference>
<dbReference type="PDBsum" id="8IEY"/>
<dbReference type="PDBsum" id="8IFX"/>
<dbReference type="SMR" id="O66986"/>
<dbReference type="FunCoup" id="O66986">
    <property type="interactions" value="441"/>
</dbReference>
<dbReference type="STRING" id="224324.aq_801"/>
<dbReference type="DNASU" id="1193436"/>
<dbReference type="EnsemblBacteria" id="AAC06951">
    <property type="protein sequence ID" value="AAC06951"/>
    <property type="gene ID" value="aq_801"/>
</dbReference>
<dbReference type="KEGG" id="aae:aq_801"/>
<dbReference type="PATRIC" id="fig|224324.8.peg.632"/>
<dbReference type="eggNOG" id="COG0533">
    <property type="taxonomic scope" value="Bacteria"/>
</dbReference>
<dbReference type="HOGENOM" id="CLU_023208_0_2_0"/>
<dbReference type="InParanoid" id="O66986"/>
<dbReference type="OrthoDB" id="9806197at2"/>
<dbReference type="Proteomes" id="UP000000798">
    <property type="component" value="Chromosome"/>
</dbReference>
<dbReference type="GO" id="GO:0005737">
    <property type="term" value="C:cytoplasm"/>
    <property type="evidence" value="ECO:0007669"/>
    <property type="project" value="UniProtKB-SubCell"/>
</dbReference>
<dbReference type="GO" id="GO:0005506">
    <property type="term" value="F:iron ion binding"/>
    <property type="evidence" value="ECO:0007669"/>
    <property type="project" value="UniProtKB-UniRule"/>
</dbReference>
<dbReference type="GO" id="GO:0061711">
    <property type="term" value="F:N(6)-L-threonylcarbamoyladenine synthase activity"/>
    <property type="evidence" value="ECO:0007669"/>
    <property type="project" value="UniProtKB-EC"/>
</dbReference>
<dbReference type="GO" id="GO:0002949">
    <property type="term" value="P:tRNA threonylcarbamoyladenosine modification"/>
    <property type="evidence" value="ECO:0007669"/>
    <property type="project" value="UniProtKB-UniRule"/>
</dbReference>
<dbReference type="CDD" id="cd24133">
    <property type="entry name" value="ASKHA_NBD_TsaD_bac"/>
    <property type="match status" value="1"/>
</dbReference>
<dbReference type="FunFam" id="3.30.420.40:FF:000012">
    <property type="entry name" value="tRNA N6-adenosine threonylcarbamoyltransferase"/>
    <property type="match status" value="1"/>
</dbReference>
<dbReference type="FunFam" id="3.30.420.40:FF:000040">
    <property type="entry name" value="tRNA N6-adenosine threonylcarbamoyltransferase"/>
    <property type="match status" value="1"/>
</dbReference>
<dbReference type="Gene3D" id="3.30.420.40">
    <property type="match status" value="2"/>
</dbReference>
<dbReference type="HAMAP" id="MF_01445">
    <property type="entry name" value="TsaD"/>
    <property type="match status" value="1"/>
</dbReference>
<dbReference type="InterPro" id="IPR043129">
    <property type="entry name" value="ATPase_NBD"/>
</dbReference>
<dbReference type="InterPro" id="IPR000905">
    <property type="entry name" value="Gcp-like_dom"/>
</dbReference>
<dbReference type="InterPro" id="IPR017861">
    <property type="entry name" value="KAE1/TsaD"/>
</dbReference>
<dbReference type="InterPro" id="IPR017860">
    <property type="entry name" value="Peptidase_M22_CS"/>
</dbReference>
<dbReference type="InterPro" id="IPR022450">
    <property type="entry name" value="TsaD"/>
</dbReference>
<dbReference type="NCBIfam" id="TIGR00329">
    <property type="entry name" value="gcp_kae1"/>
    <property type="match status" value="1"/>
</dbReference>
<dbReference type="NCBIfam" id="TIGR03723">
    <property type="entry name" value="T6A_TsaD_YgjD"/>
    <property type="match status" value="1"/>
</dbReference>
<dbReference type="PANTHER" id="PTHR11735">
    <property type="entry name" value="TRNA N6-ADENOSINE THREONYLCARBAMOYLTRANSFERASE"/>
    <property type="match status" value="1"/>
</dbReference>
<dbReference type="PANTHER" id="PTHR11735:SF6">
    <property type="entry name" value="TRNA N6-ADENOSINE THREONYLCARBAMOYLTRANSFERASE, MITOCHONDRIAL"/>
    <property type="match status" value="1"/>
</dbReference>
<dbReference type="Pfam" id="PF00814">
    <property type="entry name" value="TsaD"/>
    <property type="match status" value="1"/>
</dbReference>
<dbReference type="PRINTS" id="PR00789">
    <property type="entry name" value="OSIALOPTASE"/>
</dbReference>
<dbReference type="SUPFAM" id="SSF53067">
    <property type="entry name" value="Actin-like ATPase domain"/>
    <property type="match status" value="2"/>
</dbReference>
<dbReference type="PROSITE" id="PS01016">
    <property type="entry name" value="GLYCOPROTEASE"/>
    <property type="match status" value="1"/>
</dbReference>
<accession>O66986</accession>
<gene>
    <name evidence="1" type="primary">tsaD</name>
    <name type="synonym">gcp</name>
    <name type="ordered locus">aq_801</name>
</gene>
<organism>
    <name type="scientific">Aquifex aeolicus (strain VF5)</name>
    <dbReference type="NCBI Taxonomy" id="224324"/>
    <lineage>
        <taxon>Bacteria</taxon>
        <taxon>Pseudomonadati</taxon>
        <taxon>Aquificota</taxon>
        <taxon>Aquificia</taxon>
        <taxon>Aquificales</taxon>
        <taxon>Aquificaceae</taxon>
        <taxon>Aquifex</taxon>
    </lineage>
</organism>
<sequence length="335" mass="37370">MRTLAVETSCDETALAIYDDQKGVLGNVILSQAVVHSPFGGVVPELSAREHTRNILPIFDRLLKESRINLEEIDFISFTLTPGLILSLVVGVAFAKALAYEYRKPLVPVHHLEGHIYSVFLEKKVEYPFLALIISGGHTDLYLVRDFGRYDFLGGTLDDAVGEAYDKVAKMLGLGYPGGPIIDRLAKEGKKLYPLPKPLMEEGNLNFSFSGLKTAILNLLKKEKNVRKEDIAYSFQETVVEILLEKSLWAMKKTGIKRLVVVGGVSANSRLREVFKKASQEYGFELYIPHPSLSTDNALMIAYAGMERFKRGVVAPLDVNPQPNIPLEEFGRIWT</sequence>
<feature type="chain" id="PRO_0000096956" description="tRNA N6-adenosine threonylcarbamoyltransferase">
    <location>
        <begin position="1"/>
        <end position="335"/>
    </location>
</feature>
<feature type="binding site" evidence="1">
    <location>
        <position position="111"/>
    </location>
    <ligand>
        <name>Fe cation</name>
        <dbReference type="ChEBI" id="CHEBI:24875"/>
    </ligand>
</feature>
<feature type="binding site" evidence="1">
    <location>
        <position position="115"/>
    </location>
    <ligand>
        <name>Fe cation</name>
        <dbReference type="ChEBI" id="CHEBI:24875"/>
    </ligand>
</feature>
<feature type="binding site" evidence="1">
    <location>
        <begin position="133"/>
        <end position="137"/>
    </location>
    <ligand>
        <name>substrate</name>
    </ligand>
</feature>
<feature type="binding site" evidence="1">
    <location>
        <position position="166"/>
    </location>
    <ligand>
        <name>substrate</name>
    </ligand>
</feature>
<feature type="binding site" evidence="1">
    <location>
        <position position="179"/>
    </location>
    <ligand>
        <name>substrate</name>
    </ligand>
</feature>
<feature type="binding site" evidence="1">
    <location>
        <position position="183"/>
    </location>
    <ligand>
        <name>substrate</name>
    </ligand>
</feature>
<feature type="binding site" evidence="1">
    <location>
        <position position="268"/>
    </location>
    <ligand>
        <name>substrate</name>
    </ligand>
</feature>
<feature type="binding site" evidence="1">
    <location>
        <position position="296"/>
    </location>
    <ligand>
        <name>Fe cation</name>
        <dbReference type="ChEBI" id="CHEBI:24875"/>
    </ligand>
</feature>
<feature type="strand" evidence="2">
    <location>
        <begin position="2"/>
        <end position="7"/>
    </location>
</feature>
<feature type="strand" evidence="2">
    <location>
        <begin position="9"/>
        <end position="19"/>
    </location>
</feature>
<feature type="turn" evidence="2">
    <location>
        <begin position="20"/>
        <end position="22"/>
    </location>
</feature>
<feature type="strand" evidence="2">
    <location>
        <begin position="23"/>
        <end position="31"/>
    </location>
</feature>
<feature type="helix" evidence="2">
    <location>
        <begin position="33"/>
        <end position="36"/>
    </location>
</feature>
<feature type="helix" evidence="2">
    <location>
        <begin position="37"/>
        <end position="39"/>
    </location>
</feature>
<feature type="helix" evidence="2">
    <location>
        <begin position="44"/>
        <end position="66"/>
    </location>
</feature>
<feature type="helix" evidence="2">
    <location>
        <begin position="70"/>
        <end position="72"/>
    </location>
</feature>
<feature type="strand" evidence="2">
    <location>
        <begin position="75"/>
        <end position="83"/>
    </location>
</feature>
<feature type="helix" evidence="2">
    <location>
        <begin position="85"/>
        <end position="102"/>
    </location>
</feature>
<feature type="strand" evidence="2">
    <location>
        <begin position="106"/>
        <end position="110"/>
    </location>
</feature>
<feature type="helix" evidence="2">
    <location>
        <begin position="111"/>
        <end position="117"/>
    </location>
</feature>
<feature type="helix" evidence="2">
    <location>
        <begin position="118"/>
        <end position="121"/>
    </location>
</feature>
<feature type="strand" evidence="2">
    <location>
        <begin position="127"/>
        <end position="135"/>
    </location>
</feature>
<feature type="strand" evidence="2">
    <location>
        <begin position="138"/>
        <end position="146"/>
    </location>
</feature>
<feature type="strand" evidence="2">
    <location>
        <begin position="149"/>
        <end position="154"/>
    </location>
</feature>
<feature type="strand" evidence="2">
    <location>
        <begin position="156"/>
        <end position="158"/>
    </location>
</feature>
<feature type="helix" evidence="2">
    <location>
        <begin position="161"/>
        <end position="171"/>
    </location>
</feature>
<feature type="helix" evidence="2">
    <location>
        <begin position="179"/>
        <end position="186"/>
    </location>
</feature>
<feature type="helix" evidence="2">
    <location>
        <begin position="212"/>
        <end position="217"/>
    </location>
</feature>
<feature type="helix" evidence="2">
    <location>
        <begin position="228"/>
        <end position="254"/>
    </location>
</feature>
<feature type="strand" evidence="2">
    <location>
        <begin position="258"/>
        <end position="263"/>
    </location>
</feature>
<feature type="helix" evidence="2">
    <location>
        <begin position="264"/>
        <end position="267"/>
    </location>
</feature>
<feature type="helix" evidence="2">
    <location>
        <begin position="269"/>
        <end position="282"/>
    </location>
</feature>
<feature type="strand" evidence="2">
    <location>
        <begin position="285"/>
        <end position="287"/>
    </location>
</feature>
<feature type="helix" evidence="2">
    <location>
        <begin position="291"/>
        <end position="293"/>
    </location>
</feature>
<feature type="helix" evidence="2">
    <location>
        <begin position="299"/>
        <end position="310"/>
    </location>
</feature>
<feature type="helix" evidence="2">
    <location>
        <begin position="327"/>
        <end position="334"/>
    </location>
</feature>
<proteinExistence type="evidence at protein level"/>
<evidence type="ECO:0000255" key="1">
    <source>
        <dbReference type="HAMAP-Rule" id="MF_01445"/>
    </source>
</evidence>
<evidence type="ECO:0007829" key="2">
    <source>
        <dbReference type="PDB" id="8IEY"/>
    </source>
</evidence>
<protein>
    <recommendedName>
        <fullName evidence="1">tRNA N6-adenosine threonylcarbamoyltransferase</fullName>
        <ecNumber evidence="1">2.3.1.234</ecNumber>
    </recommendedName>
    <alternativeName>
        <fullName evidence="1">N6-L-threonylcarbamoyladenine synthase</fullName>
        <shortName evidence="1">t(6)A synthase</shortName>
    </alternativeName>
    <alternativeName>
        <fullName evidence="1">t(6)A37 threonylcarbamoyladenosine biosynthesis protein TsaD</fullName>
    </alternativeName>
    <alternativeName>
        <fullName evidence="1">tRNA threonylcarbamoyladenosine biosynthesis protein TsaD</fullName>
    </alternativeName>
</protein>
<reference key="1">
    <citation type="journal article" date="1998" name="Nature">
        <title>The complete genome of the hyperthermophilic bacterium Aquifex aeolicus.</title>
        <authorList>
            <person name="Deckert G."/>
            <person name="Warren P.V."/>
            <person name="Gaasterland T."/>
            <person name="Young W.G."/>
            <person name="Lenox A.L."/>
            <person name="Graham D.E."/>
            <person name="Overbeek R."/>
            <person name="Snead M.A."/>
            <person name="Keller M."/>
            <person name="Aujay M."/>
            <person name="Huber R."/>
            <person name="Feldman R.A."/>
            <person name="Short J.M."/>
            <person name="Olsen G.J."/>
            <person name="Swanson R.V."/>
        </authorList>
    </citation>
    <scope>NUCLEOTIDE SEQUENCE [LARGE SCALE GENOMIC DNA]</scope>
    <source>
        <strain>VF5</strain>
    </source>
</reference>
<name>TSAD_AQUAE</name>
<keyword id="KW-0002">3D-structure</keyword>
<keyword id="KW-0012">Acyltransferase</keyword>
<keyword id="KW-0963">Cytoplasm</keyword>
<keyword id="KW-0408">Iron</keyword>
<keyword id="KW-0479">Metal-binding</keyword>
<keyword id="KW-1185">Reference proteome</keyword>
<keyword id="KW-0808">Transferase</keyword>
<keyword id="KW-0819">tRNA processing</keyword>